<feature type="chain" id="PRO_0000293258" description="Small ribosomal subunit protein uS4">
    <location>
        <begin position="1"/>
        <end position="203"/>
    </location>
</feature>
<feature type="domain" description="S4 RNA-binding" evidence="1">
    <location>
        <begin position="93"/>
        <end position="173"/>
    </location>
</feature>
<keyword id="KW-1185">Reference proteome</keyword>
<keyword id="KW-0687">Ribonucleoprotein</keyword>
<keyword id="KW-0689">Ribosomal protein</keyword>
<keyword id="KW-0694">RNA-binding</keyword>
<keyword id="KW-0699">rRNA-binding</keyword>
<comment type="function">
    <text evidence="1">One of the primary rRNA binding proteins, it binds directly to 16S rRNA where it nucleates assembly of the body of the 30S subunit.</text>
</comment>
<comment type="function">
    <text evidence="1">With S5 and S12 plays an important role in translational accuracy.</text>
</comment>
<comment type="subunit">
    <text evidence="1">Part of the 30S ribosomal subunit. Contacts protein S5. The interaction surface between S4 and S5 is involved in control of translational fidelity.</text>
</comment>
<comment type="similarity">
    <text evidence="1">Belongs to the universal ribosomal protein uS4 family.</text>
</comment>
<reference key="1">
    <citation type="submission" date="2006-12" db="EMBL/GenBank/DDBJ databases">
        <title>Complete sequence of Chlorobium phaeobacteroides DSM 266.</title>
        <authorList>
            <consortium name="US DOE Joint Genome Institute"/>
            <person name="Copeland A."/>
            <person name="Lucas S."/>
            <person name="Lapidus A."/>
            <person name="Barry K."/>
            <person name="Detter J.C."/>
            <person name="Glavina del Rio T."/>
            <person name="Hammon N."/>
            <person name="Israni S."/>
            <person name="Pitluck S."/>
            <person name="Goltsman E."/>
            <person name="Schmutz J."/>
            <person name="Larimer F."/>
            <person name="Land M."/>
            <person name="Hauser L."/>
            <person name="Mikhailova N."/>
            <person name="Li T."/>
            <person name="Overmann J."/>
            <person name="Bryant D.A."/>
            <person name="Richardson P."/>
        </authorList>
    </citation>
    <scope>NUCLEOTIDE SEQUENCE [LARGE SCALE GENOMIC DNA]</scope>
    <source>
        <strain>DSM 266 / SMG 266 / 2430</strain>
    </source>
</reference>
<gene>
    <name evidence="1" type="primary">rpsD</name>
    <name type="ordered locus">Cpha266_2397</name>
</gene>
<accession>A1BJ08</accession>
<proteinExistence type="inferred from homology"/>
<organism>
    <name type="scientific">Chlorobium phaeobacteroides (strain DSM 266 / SMG 266 / 2430)</name>
    <dbReference type="NCBI Taxonomy" id="290317"/>
    <lineage>
        <taxon>Bacteria</taxon>
        <taxon>Pseudomonadati</taxon>
        <taxon>Chlorobiota</taxon>
        <taxon>Chlorobiia</taxon>
        <taxon>Chlorobiales</taxon>
        <taxon>Chlorobiaceae</taxon>
        <taxon>Chlorobium/Pelodictyon group</taxon>
        <taxon>Chlorobium</taxon>
    </lineage>
</organism>
<dbReference type="EMBL" id="CP000492">
    <property type="protein sequence ID" value="ABL66385.1"/>
    <property type="molecule type" value="Genomic_DNA"/>
</dbReference>
<dbReference type="RefSeq" id="WP_011746168.1">
    <property type="nucleotide sequence ID" value="NC_008639.1"/>
</dbReference>
<dbReference type="SMR" id="A1BJ08"/>
<dbReference type="STRING" id="290317.Cpha266_2397"/>
<dbReference type="KEGG" id="cph:Cpha266_2397"/>
<dbReference type="eggNOG" id="COG0522">
    <property type="taxonomic scope" value="Bacteria"/>
</dbReference>
<dbReference type="HOGENOM" id="CLU_092403_0_2_10"/>
<dbReference type="OrthoDB" id="9803672at2"/>
<dbReference type="Proteomes" id="UP000008701">
    <property type="component" value="Chromosome"/>
</dbReference>
<dbReference type="GO" id="GO:0015935">
    <property type="term" value="C:small ribosomal subunit"/>
    <property type="evidence" value="ECO:0007669"/>
    <property type="project" value="InterPro"/>
</dbReference>
<dbReference type="GO" id="GO:0019843">
    <property type="term" value="F:rRNA binding"/>
    <property type="evidence" value="ECO:0007669"/>
    <property type="project" value="UniProtKB-UniRule"/>
</dbReference>
<dbReference type="GO" id="GO:0003735">
    <property type="term" value="F:structural constituent of ribosome"/>
    <property type="evidence" value="ECO:0007669"/>
    <property type="project" value="InterPro"/>
</dbReference>
<dbReference type="GO" id="GO:0042274">
    <property type="term" value="P:ribosomal small subunit biogenesis"/>
    <property type="evidence" value="ECO:0007669"/>
    <property type="project" value="TreeGrafter"/>
</dbReference>
<dbReference type="GO" id="GO:0006412">
    <property type="term" value="P:translation"/>
    <property type="evidence" value="ECO:0007669"/>
    <property type="project" value="UniProtKB-UniRule"/>
</dbReference>
<dbReference type="CDD" id="cd00165">
    <property type="entry name" value="S4"/>
    <property type="match status" value="1"/>
</dbReference>
<dbReference type="FunFam" id="3.10.290.10:FF:000001">
    <property type="entry name" value="30S ribosomal protein S4"/>
    <property type="match status" value="1"/>
</dbReference>
<dbReference type="Gene3D" id="1.10.1050.10">
    <property type="entry name" value="Ribosomal Protein S4 Delta 41, Chain A, domain 1"/>
    <property type="match status" value="1"/>
</dbReference>
<dbReference type="Gene3D" id="3.10.290.10">
    <property type="entry name" value="RNA-binding S4 domain"/>
    <property type="match status" value="1"/>
</dbReference>
<dbReference type="HAMAP" id="MF_01306_B">
    <property type="entry name" value="Ribosomal_uS4_B"/>
    <property type="match status" value="1"/>
</dbReference>
<dbReference type="InterPro" id="IPR022801">
    <property type="entry name" value="Ribosomal_uS4"/>
</dbReference>
<dbReference type="InterPro" id="IPR005709">
    <property type="entry name" value="Ribosomal_uS4_bac-type"/>
</dbReference>
<dbReference type="InterPro" id="IPR001912">
    <property type="entry name" value="Ribosomal_uS4_N"/>
</dbReference>
<dbReference type="InterPro" id="IPR002942">
    <property type="entry name" value="S4_RNA-bd"/>
</dbReference>
<dbReference type="InterPro" id="IPR036986">
    <property type="entry name" value="S4_RNA-bd_sf"/>
</dbReference>
<dbReference type="NCBIfam" id="NF003717">
    <property type="entry name" value="PRK05327.1"/>
    <property type="match status" value="1"/>
</dbReference>
<dbReference type="NCBIfam" id="TIGR01017">
    <property type="entry name" value="rpsD_bact"/>
    <property type="match status" value="1"/>
</dbReference>
<dbReference type="PANTHER" id="PTHR11831">
    <property type="entry name" value="30S 40S RIBOSOMAL PROTEIN"/>
    <property type="match status" value="1"/>
</dbReference>
<dbReference type="PANTHER" id="PTHR11831:SF4">
    <property type="entry name" value="SMALL RIBOSOMAL SUBUNIT PROTEIN US4M"/>
    <property type="match status" value="1"/>
</dbReference>
<dbReference type="Pfam" id="PF00163">
    <property type="entry name" value="Ribosomal_S4"/>
    <property type="match status" value="1"/>
</dbReference>
<dbReference type="Pfam" id="PF01479">
    <property type="entry name" value="S4"/>
    <property type="match status" value="1"/>
</dbReference>
<dbReference type="SMART" id="SM01390">
    <property type="entry name" value="Ribosomal_S4"/>
    <property type="match status" value="1"/>
</dbReference>
<dbReference type="SMART" id="SM00363">
    <property type="entry name" value="S4"/>
    <property type="match status" value="1"/>
</dbReference>
<dbReference type="SUPFAM" id="SSF55174">
    <property type="entry name" value="Alpha-L RNA-binding motif"/>
    <property type="match status" value="1"/>
</dbReference>
<dbReference type="PROSITE" id="PS50889">
    <property type="entry name" value="S4"/>
    <property type="match status" value="1"/>
</dbReference>
<name>RS4_CHLPD</name>
<protein>
    <recommendedName>
        <fullName evidence="1">Small ribosomal subunit protein uS4</fullName>
    </recommendedName>
    <alternativeName>
        <fullName evidence="2">30S ribosomal protein S4</fullName>
    </alternativeName>
</protein>
<evidence type="ECO:0000255" key="1">
    <source>
        <dbReference type="HAMAP-Rule" id="MF_01306"/>
    </source>
</evidence>
<evidence type="ECO:0000305" key="2"/>
<sequence length="203" mass="23185">MARFRGSITKVSRRLGIALSPKAEKYLERRPFAPGQHGQSRKGKISEYALQLREKQKMKYLYGVLENQFRSYYRKAVSQRGVTGDNLVKLLERRFDNVVFRSGFAASRSAARQLVTHGHLTINGKKVNIPSYLLTPGELIEFRQKSKNMGAVTDSLNKAPDARIPSWIQVDKANQKAVFLSVPEREEVQEPFNEQLVVELYSK</sequence>